<keyword id="KW-0749">Sporulation</keyword>
<accession>C8ZCU0</accession>
<dbReference type="EMBL" id="FN393078">
    <property type="protein sequence ID" value="CAY81206.1"/>
    <property type="molecule type" value="Genomic_DNA"/>
</dbReference>
<dbReference type="HOGENOM" id="CLU_106818_0_0_1"/>
<dbReference type="OrthoDB" id="6849at4893"/>
<dbReference type="Proteomes" id="UP000000286">
    <property type="component" value="Chromosome XII, Scaffold EC1118_1L10"/>
</dbReference>
<dbReference type="GO" id="GO:0030437">
    <property type="term" value="P:ascospore formation"/>
    <property type="evidence" value="ECO:0007669"/>
    <property type="project" value="InterPro"/>
</dbReference>
<dbReference type="InterPro" id="IPR016613">
    <property type="entry name" value="Irc19"/>
</dbReference>
<dbReference type="PIRSF" id="PIRSF013329">
    <property type="entry name" value="UCP013329"/>
    <property type="match status" value="1"/>
</dbReference>
<gene>
    <name type="primary">IRC19</name>
    <name type="synonym">RRG4</name>
    <name type="ORF">EC1118_1L10_0320g</name>
</gene>
<comment type="function">
    <text evidence="1">Involved in sporulation and maintenance of the mitochondrial DNA. Is probably involved in a pathway contributing to genomic integrity (By similarity).</text>
</comment>
<comment type="similarity">
    <text evidence="2">Belongs to the IRC19 family.</text>
</comment>
<proteinExistence type="inferred from homology"/>
<reference key="1">
    <citation type="journal article" date="2009" name="Proc. Natl. Acad. Sci. U.S.A.">
        <title>Eukaryote-to-eukaryote gene transfer events revealed by the genome sequence of the wine yeast Saccharomyces cerevisiae EC1118.</title>
        <authorList>
            <person name="Novo M."/>
            <person name="Bigey F."/>
            <person name="Beyne E."/>
            <person name="Galeote V."/>
            <person name="Gavory F."/>
            <person name="Mallet S."/>
            <person name="Cambon B."/>
            <person name="Legras J.-L."/>
            <person name="Wincker P."/>
            <person name="Casaregola S."/>
            <person name="Dequin S."/>
        </authorList>
    </citation>
    <scope>NUCLEOTIDE SEQUENCE [LARGE SCALE GENOMIC DNA]</scope>
    <source>
        <strain>Lalvin EC1118 / Prise de mousse</strain>
    </source>
</reference>
<protein>
    <recommendedName>
        <fullName>Increased recombination centers protein 19</fullName>
    </recommendedName>
</protein>
<organism>
    <name type="scientific">Saccharomyces cerevisiae (strain Lalvin EC1118 / Prise de mousse)</name>
    <name type="common">Baker's yeast</name>
    <dbReference type="NCBI Taxonomy" id="643680"/>
    <lineage>
        <taxon>Eukaryota</taxon>
        <taxon>Fungi</taxon>
        <taxon>Dikarya</taxon>
        <taxon>Ascomycota</taxon>
        <taxon>Saccharomycotina</taxon>
        <taxon>Saccharomycetes</taxon>
        <taxon>Saccharomycetales</taxon>
        <taxon>Saccharomycetaceae</taxon>
        <taxon>Saccharomyces</taxon>
    </lineage>
</organism>
<name>IRC19_YEAS8</name>
<sequence>MRKPSITITTAKAIITPDYTLIKSHSKYQLPSRFQKLDADSPERSTVVKLFYRRFMRLKPFISNVKMVKDTYRDYVRYKFMKENYELKRYLVFNPDGLRSKIKLELLSNTKCCERIVPVTEMQRTLEFVLKSCSYLPETKVQKWDIARDNTYCRQILKNLLTMQYEKYRSILHRGIGHDELDVKFSHLKTTSSPLTKLNKTEKKKIPLFKVFSDFDTTLIYLNETLGTRL</sequence>
<feature type="chain" id="PRO_0000399067" description="Increased recombination centers protein 19">
    <location>
        <begin position="1"/>
        <end position="230"/>
    </location>
</feature>
<evidence type="ECO:0000250" key="1"/>
<evidence type="ECO:0000305" key="2"/>